<feature type="chain" id="PRO_0000069586" description="Hydroxycarboxylic acid receptor 1">
    <location>
        <begin position="1"/>
        <end position="346"/>
    </location>
</feature>
<feature type="topological domain" description="Extracellular" evidence="1">
    <location>
        <begin position="1"/>
        <end position="21"/>
    </location>
</feature>
<feature type="transmembrane region" description="Helical; Name=1" evidence="1">
    <location>
        <begin position="22"/>
        <end position="42"/>
    </location>
</feature>
<feature type="topological domain" description="Cytoplasmic" evidence="1">
    <location>
        <begin position="43"/>
        <end position="49"/>
    </location>
</feature>
<feature type="transmembrane region" description="Helical; Name=2" evidence="1">
    <location>
        <begin position="50"/>
        <end position="70"/>
    </location>
</feature>
<feature type="topological domain" description="Extracellular" evidence="1">
    <location>
        <begin position="71"/>
        <end position="89"/>
    </location>
</feature>
<feature type="transmembrane region" description="Helical; Name=3" evidence="1">
    <location>
        <begin position="90"/>
        <end position="110"/>
    </location>
</feature>
<feature type="topological domain" description="Cytoplasmic" evidence="1">
    <location>
        <begin position="111"/>
        <end position="130"/>
    </location>
</feature>
<feature type="transmembrane region" description="Helical; Name=4" evidence="1">
    <location>
        <begin position="131"/>
        <end position="151"/>
    </location>
</feature>
<feature type="topological domain" description="Extracellular" evidence="1">
    <location>
        <begin position="152"/>
        <end position="182"/>
    </location>
</feature>
<feature type="transmembrane region" description="Helical; Name=5" evidence="1">
    <location>
        <begin position="183"/>
        <end position="203"/>
    </location>
</feature>
<feature type="topological domain" description="Cytoplasmic" evidence="1">
    <location>
        <begin position="204"/>
        <end position="220"/>
    </location>
</feature>
<feature type="transmembrane region" description="Helical; Name=6" evidence="1">
    <location>
        <begin position="221"/>
        <end position="241"/>
    </location>
</feature>
<feature type="topological domain" description="Extracellular" evidence="1">
    <location>
        <begin position="242"/>
        <end position="261"/>
    </location>
</feature>
<feature type="transmembrane region" description="Helical; Name=7" evidence="1">
    <location>
        <begin position="262"/>
        <end position="281"/>
    </location>
</feature>
<feature type="topological domain" description="Cytoplasmic" evidence="1">
    <location>
        <begin position="282"/>
        <end position="346"/>
    </location>
</feature>
<feature type="glycosylation site" description="N-linked (GlcNAc...) asparagine" evidence="1">
    <location>
        <position position="3"/>
    </location>
</feature>
<feature type="disulfide bond" evidence="2">
    <location>
        <begin position="88"/>
        <end position="165"/>
    </location>
</feature>
<feature type="sequence variant" id="VAR_025151" description="In dbSNP:rs35292336." evidence="5">
    <original>H</original>
    <variation>Q</variation>
    <location>
        <position position="43"/>
    </location>
</feature>
<feature type="sequence variant" id="VAR_025152" evidence="5">
    <original>D</original>
    <variation>E</variation>
    <location>
        <position position="253"/>
    </location>
</feature>
<feature type="sequence variant" id="VAR_061218" description="In dbSNP:rs36124671.">
    <original>D</original>
    <variation>H</variation>
    <location>
        <position position="253"/>
    </location>
</feature>
<feature type="mutagenesis site" description="Diminishes the response to L-lactate." evidence="4">
    <original>R</original>
    <variation>A</variation>
    <location>
        <position position="99"/>
    </location>
</feature>
<feature type="mutagenesis site" description="Diminishes the response to L-lactate." evidence="4">
    <original>Y</original>
    <variation>A</variation>
    <location>
        <position position="233"/>
    </location>
</feature>
<feature type="mutagenesis site" description="Diminishes the response to L-lactate." evidence="4">
    <original>R</original>
    <variation>A</variation>
    <location>
        <position position="240"/>
    </location>
</feature>
<feature type="mutagenesis site" description="Diminishes the response to L-lactate." evidence="4">
    <original>T</original>
    <variation>A</variation>
    <location>
        <position position="267"/>
    </location>
</feature>
<feature type="sequence conflict" description="In Ref. 11; AAH95506." evidence="6" ref="11">
    <original>C</original>
    <variation>Y</variation>
    <location>
        <position position="38"/>
    </location>
</feature>
<feature type="sequence conflict" description="In Ref. 11; AAH66883." evidence="6" ref="11">
    <original>R</original>
    <variation>K</variation>
    <location>
        <position position="113"/>
    </location>
</feature>
<feature type="sequence conflict" description="In Ref. 11; AAH95506." evidence="6" ref="11">
    <original>M</original>
    <variation>I</variation>
    <location>
        <position position="187"/>
    </location>
</feature>
<feature type="sequence conflict" description="In Ref. 11; AAH95506." evidence="6" ref="11">
    <original>A</original>
    <variation>T</variation>
    <location>
        <position position="213"/>
    </location>
</feature>
<feature type="sequence conflict" description="In Ref. 11; AAH95506." evidence="6" ref="11">
    <original>I</original>
    <variation>T</variation>
    <location>
        <position position="222"/>
    </location>
</feature>
<comment type="function">
    <text evidence="4">Acts as a receptor for L-lactate and mediates its anti-lipolytic effect through a G(i)-protein-mediated pathway.</text>
</comment>
<comment type="subcellular location">
    <subcellularLocation>
        <location>Cell membrane</location>
        <topology>Multi-pass membrane protein</topology>
    </subcellularLocation>
</comment>
<comment type="tissue specificity">
    <text evidence="3 4">Expressed abundantly in brown and white fat. It also detectable at lower levels in liver, kidney, skeletal muscle, brain and pituitary. Not detected in frontal, temporal and occipital lobes of the cortex, basal forebrain, caudate nucleus, nucleus accumbens and hippocampus.</text>
</comment>
<comment type="similarity">
    <text evidence="2">Belongs to the G-protein coupled receptor 1 family.</text>
</comment>
<evidence type="ECO:0000255" key="1"/>
<evidence type="ECO:0000255" key="2">
    <source>
        <dbReference type="PROSITE-ProRule" id="PRU00521"/>
    </source>
</evidence>
<evidence type="ECO:0000269" key="3">
    <source>
    </source>
</evidence>
<evidence type="ECO:0000269" key="4">
    <source>
    </source>
</evidence>
<evidence type="ECO:0000269" key="5">
    <source ref="8"/>
</evidence>
<evidence type="ECO:0000305" key="6"/>
<name>HCAR1_HUMAN</name>
<proteinExistence type="evidence at protein level"/>
<accession>Q9BXC0</accession>
<accession>B2R9X4</accession>
<accession>Q3Y5J3</accession>
<accession>Q4VBN1</accession>
<accession>Q6NXU5</accession>
<reference key="1">
    <citation type="journal article" date="2001" name="Gene">
        <title>Discovery and mapping of ten novel G protein-coupled receptor genes.</title>
        <authorList>
            <person name="Lee D.K."/>
            <person name="Nguyen T."/>
            <person name="Lynch K.R."/>
            <person name="Cheng R."/>
            <person name="Vanti W.B."/>
            <person name="Arkhitko O."/>
            <person name="Lewis T."/>
            <person name="Evans J.F."/>
            <person name="George S.R."/>
            <person name="O'Dowd B.F."/>
        </authorList>
    </citation>
    <scope>NUCLEOTIDE SEQUENCE [GENOMIC DNA]</scope>
    <scope>TISSUE SPECIFICITY</scope>
</reference>
<reference key="2">
    <citation type="journal article" date="2009" name="J. Biol. Chem.">
        <title>Lactate inhibits lipolysis in fat cells through activation of an orphan G-protein-coupled receptor, GPR81.</title>
        <authorList>
            <person name="Liu C."/>
            <person name="Wu J."/>
            <person name="Zhu J."/>
            <person name="Kuei C."/>
            <person name="Yu J."/>
            <person name="Shelton J."/>
            <person name="Sutton S.W."/>
            <person name="Li X."/>
            <person name="Yun S.J."/>
            <person name="Mirzadegan T."/>
            <person name="Mazur C."/>
            <person name="Kamme F."/>
            <person name="Lovenberg T.W."/>
        </authorList>
    </citation>
    <scope>NUCLEOTIDE SEQUENCE [MRNA]</scope>
    <scope>FUNCTION</scope>
    <scope>TISSUE SPECIFICITY</scope>
    <scope>MUTAGENESIS OF ARG-99; TYR-233; ARG-240 AND THR-267</scope>
</reference>
<reference key="3">
    <citation type="submission" date="2001-02" db="EMBL/GenBank/DDBJ databases">
        <title>Molecular cloning of FKSG80, a novel gene encoding a putative chemokine receptor.</title>
        <authorList>
            <person name="Wang Y.-G."/>
            <person name="Gong L."/>
        </authorList>
    </citation>
    <scope>NUCLEOTIDE SEQUENCE [MRNA]</scope>
</reference>
<reference key="4">
    <citation type="submission" date="2001-07" db="EMBL/GenBank/DDBJ databases">
        <title>Genome-wide discovery and analysis of human seven transmembrane helix receptor genes.</title>
        <authorList>
            <person name="Suwa M."/>
            <person name="Sato T."/>
            <person name="Okouchi I."/>
            <person name="Arita M."/>
            <person name="Futami K."/>
            <person name="Matsumoto S."/>
            <person name="Tsutsumi S."/>
            <person name="Aburatani H."/>
            <person name="Asai K."/>
            <person name="Akiyama Y."/>
        </authorList>
    </citation>
    <scope>NUCLEOTIDE SEQUENCE [GENOMIC DNA]</scope>
</reference>
<reference key="5">
    <citation type="submission" date="2003-12" db="EMBL/GenBank/DDBJ databases">
        <title>cDNA clones of human proteins involved in signal transduction sequenced by the Guthrie cDNA resource center (www.cdna.org).</title>
        <authorList>
            <person name="King M.M."/>
            <person name="Aronstam R.S."/>
            <person name="Sharma S.V."/>
        </authorList>
    </citation>
    <scope>NUCLEOTIDE SEQUENCE [LARGE SCALE MRNA]</scope>
    <source>
        <tissue>Kidney</tissue>
    </source>
</reference>
<reference key="6">
    <citation type="journal article" date="2004" name="Nat. Genet.">
        <title>Complete sequencing and characterization of 21,243 full-length human cDNAs.</title>
        <authorList>
            <person name="Ota T."/>
            <person name="Suzuki Y."/>
            <person name="Nishikawa T."/>
            <person name="Otsuki T."/>
            <person name="Sugiyama T."/>
            <person name="Irie R."/>
            <person name="Wakamatsu A."/>
            <person name="Hayashi K."/>
            <person name="Sato H."/>
            <person name="Nagai K."/>
            <person name="Kimura K."/>
            <person name="Makita H."/>
            <person name="Sekine M."/>
            <person name="Obayashi M."/>
            <person name="Nishi T."/>
            <person name="Shibahara T."/>
            <person name="Tanaka T."/>
            <person name="Ishii S."/>
            <person name="Yamamoto J."/>
            <person name="Saito K."/>
            <person name="Kawai Y."/>
            <person name="Isono Y."/>
            <person name="Nakamura Y."/>
            <person name="Nagahari K."/>
            <person name="Murakami K."/>
            <person name="Yasuda T."/>
            <person name="Iwayanagi T."/>
            <person name="Wagatsuma M."/>
            <person name="Shiratori A."/>
            <person name="Sudo H."/>
            <person name="Hosoiri T."/>
            <person name="Kaku Y."/>
            <person name="Kodaira H."/>
            <person name="Kondo H."/>
            <person name="Sugawara M."/>
            <person name="Takahashi M."/>
            <person name="Kanda K."/>
            <person name="Yokoi T."/>
            <person name="Furuya T."/>
            <person name="Kikkawa E."/>
            <person name="Omura Y."/>
            <person name="Abe K."/>
            <person name="Kamihara K."/>
            <person name="Katsuta N."/>
            <person name="Sato K."/>
            <person name="Tanikawa M."/>
            <person name="Yamazaki M."/>
            <person name="Ninomiya K."/>
            <person name="Ishibashi T."/>
            <person name="Yamashita H."/>
            <person name="Murakawa K."/>
            <person name="Fujimori K."/>
            <person name="Tanai H."/>
            <person name="Kimata M."/>
            <person name="Watanabe M."/>
            <person name="Hiraoka S."/>
            <person name="Chiba Y."/>
            <person name="Ishida S."/>
            <person name="Ono Y."/>
            <person name="Takiguchi S."/>
            <person name="Watanabe S."/>
            <person name="Yosida M."/>
            <person name="Hotuta T."/>
            <person name="Kusano J."/>
            <person name="Kanehori K."/>
            <person name="Takahashi-Fujii A."/>
            <person name="Hara H."/>
            <person name="Tanase T.-O."/>
            <person name="Nomura Y."/>
            <person name="Togiya S."/>
            <person name="Komai F."/>
            <person name="Hara R."/>
            <person name="Takeuchi K."/>
            <person name="Arita M."/>
            <person name="Imose N."/>
            <person name="Musashino K."/>
            <person name="Yuuki H."/>
            <person name="Oshima A."/>
            <person name="Sasaki N."/>
            <person name="Aotsuka S."/>
            <person name="Yoshikawa Y."/>
            <person name="Matsunawa H."/>
            <person name="Ichihara T."/>
            <person name="Shiohata N."/>
            <person name="Sano S."/>
            <person name="Moriya S."/>
            <person name="Momiyama H."/>
            <person name="Satoh N."/>
            <person name="Takami S."/>
            <person name="Terashima Y."/>
            <person name="Suzuki O."/>
            <person name="Nakagawa S."/>
            <person name="Senoh A."/>
            <person name="Mizoguchi H."/>
            <person name="Goto Y."/>
            <person name="Shimizu F."/>
            <person name="Wakebe H."/>
            <person name="Hishigaki H."/>
            <person name="Watanabe T."/>
            <person name="Sugiyama A."/>
            <person name="Takemoto M."/>
            <person name="Kawakami B."/>
            <person name="Yamazaki M."/>
            <person name="Watanabe K."/>
            <person name="Kumagai A."/>
            <person name="Itakura S."/>
            <person name="Fukuzumi Y."/>
            <person name="Fujimori Y."/>
            <person name="Komiyama M."/>
            <person name="Tashiro H."/>
            <person name="Tanigami A."/>
            <person name="Fujiwara T."/>
            <person name="Ono T."/>
            <person name="Yamada K."/>
            <person name="Fujii Y."/>
            <person name="Ozaki K."/>
            <person name="Hirao M."/>
            <person name="Ohmori Y."/>
            <person name="Kawabata A."/>
            <person name="Hikiji T."/>
            <person name="Kobatake N."/>
            <person name="Inagaki H."/>
            <person name="Ikema Y."/>
            <person name="Okamoto S."/>
            <person name="Okitani R."/>
            <person name="Kawakami T."/>
            <person name="Noguchi S."/>
            <person name="Itoh T."/>
            <person name="Shigeta K."/>
            <person name="Senba T."/>
            <person name="Matsumura K."/>
            <person name="Nakajima Y."/>
            <person name="Mizuno T."/>
            <person name="Morinaga M."/>
            <person name="Sasaki M."/>
            <person name="Togashi T."/>
            <person name="Oyama M."/>
            <person name="Hata H."/>
            <person name="Watanabe M."/>
            <person name="Komatsu T."/>
            <person name="Mizushima-Sugano J."/>
            <person name="Satoh T."/>
            <person name="Shirai Y."/>
            <person name="Takahashi Y."/>
            <person name="Nakagawa K."/>
            <person name="Okumura K."/>
            <person name="Nagase T."/>
            <person name="Nomura N."/>
            <person name="Kikuchi H."/>
            <person name="Masuho Y."/>
            <person name="Yamashita R."/>
            <person name="Nakai K."/>
            <person name="Yada T."/>
            <person name="Nakamura Y."/>
            <person name="Ohara O."/>
            <person name="Isogai T."/>
            <person name="Sugano S."/>
        </authorList>
    </citation>
    <scope>NUCLEOTIDE SEQUENCE [LARGE SCALE MRNA]</scope>
    <source>
        <tissue>Spleen</tissue>
    </source>
</reference>
<reference key="7">
    <citation type="journal article" date="2002" name="FEBS Lett.">
        <title>Identification of G protein-coupled receptor genes from the human genome sequence.</title>
        <authorList>
            <person name="Takeda S."/>
            <person name="Kadowaki S."/>
            <person name="Haga T."/>
            <person name="Takaesu H."/>
            <person name="Mitaku S."/>
        </authorList>
    </citation>
    <scope>NUCLEOTIDE SEQUENCE [LARGE SCALE GENOMIC DNA]</scope>
</reference>
<reference key="8">
    <citation type="submission" date="2005-08" db="EMBL/GenBank/DDBJ databases">
        <authorList>
            <consortium name="SeattleSNPs variation discovery resource"/>
        </authorList>
    </citation>
    <scope>NUCLEOTIDE SEQUENCE [GENOMIC DNA]</scope>
    <scope>VARIANTS GLN-43 AND GLU-253</scope>
</reference>
<reference key="9">
    <citation type="journal article" date="2006" name="Nature">
        <title>The finished DNA sequence of human chromosome 12.</title>
        <authorList>
            <person name="Scherer S.E."/>
            <person name="Muzny D.M."/>
            <person name="Buhay C.J."/>
            <person name="Chen R."/>
            <person name="Cree A."/>
            <person name="Ding Y."/>
            <person name="Dugan-Rocha S."/>
            <person name="Gill R."/>
            <person name="Gunaratne P."/>
            <person name="Harris R.A."/>
            <person name="Hawes A.C."/>
            <person name="Hernandez J."/>
            <person name="Hodgson A.V."/>
            <person name="Hume J."/>
            <person name="Jackson A."/>
            <person name="Khan Z.M."/>
            <person name="Kovar-Smith C."/>
            <person name="Lewis L.R."/>
            <person name="Lozado R.J."/>
            <person name="Metzker M.L."/>
            <person name="Milosavljevic A."/>
            <person name="Miner G.R."/>
            <person name="Montgomery K.T."/>
            <person name="Morgan M.B."/>
            <person name="Nazareth L.V."/>
            <person name="Scott G."/>
            <person name="Sodergren E."/>
            <person name="Song X.-Z."/>
            <person name="Steffen D."/>
            <person name="Lovering R.C."/>
            <person name="Wheeler D.A."/>
            <person name="Worley K.C."/>
            <person name="Yuan Y."/>
            <person name="Zhang Z."/>
            <person name="Adams C.Q."/>
            <person name="Ansari-Lari M.A."/>
            <person name="Ayele M."/>
            <person name="Brown M.J."/>
            <person name="Chen G."/>
            <person name="Chen Z."/>
            <person name="Clerc-Blankenburg K.P."/>
            <person name="Davis C."/>
            <person name="Delgado O."/>
            <person name="Dinh H.H."/>
            <person name="Draper H."/>
            <person name="Gonzalez-Garay M.L."/>
            <person name="Havlak P."/>
            <person name="Jackson L.R."/>
            <person name="Jacob L.S."/>
            <person name="Kelly S.H."/>
            <person name="Li L."/>
            <person name="Li Z."/>
            <person name="Liu J."/>
            <person name="Liu W."/>
            <person name="Lu J."/>
            <person name="Maheshwari M."/>
            <person name="Nguyen B.-V."/>
            <person name="Okwuonu G.O."/>
            <person name="Pasternak S."/>
            <person name="Perez L.M."/>
            <person name="Plopper F.J.H."/>
            <person name="Santibanez J."/>
            <person name="Shen H."/>
            <person name="Tabor P.E."/>
            <person name="Verduzco D."/>
            <person name="Waldron L."/>
            <person name="Wang Q."/>
            <person name="Williams G.A."/>
            <person name="Zhang J."/>
            <person name="Zhou J."/>
            <person name="Allen C.C."/>
            <person name="Amin A.G."/>
            <person name="Anyalebechi V."/>
            <person name="Bailey M."/>
            <person name="Barbaria J.A."/>
            <person name="Bimage K.E."/>
            <person name="Bryant N.P."/>
            <person name="Burch P.E."/>
            <person name="Burkett C.E."/>
            <person name="Burrell K.L."/>
            <person name="Calderon E."/>
            <person name="Cardenas V."/>
            <person name="Carter K."/>
            <person name="Casias K."/>
            <person name="Cavazos I."/>
            <person name="Cavazos S.R."/>
            <person name="Ceasar H."/>
            <person name="Chacko J."/>
            <person name="Chan S.N."/>
            <person name="Chavez D."/>
            <person name="Christopoulos C."/>
            <person name="Chu J."/>
            <person name="Cockrell R."/>
            <person name="Cox C.D."/>
            <person name="Dang M."/>
            <person name="Dathorne S.R."/>
            <person name="David R."/>
            <person name="Davis C.M."/>
            <person name="Davy-Carroll L."/>
            <person name="Deshazo D.R."/>
            <person name="Donlin J.E."/>
            <person name="D'Souza L."/>
            <person name="Eaves K.A."/>
            <person name="Egan A."/>
            <person name="Emery-Cohen A.J."/>
            <person name="Escotto M."/>
            <person name="Flagg N."/>
            <person name="Forbes L.D."/>
            <person name="Gabisi A.M."/>
            <person name="Garza M."/>
            <person name="Hamilton C."/>
            <person name="Henderson N."/>
            <person name="Hernandez O."/>
            <person name="Hines S."/>
            <person name="Hogues M.E."/>
            <person name="Huang M."/>
            <person name="Idlebird D.G."/>
            <person name="Johnson R."/>
            <person name="Jolivet A."/>
            <person name="Jones S."/>
            <person name="Kagan R."/>
            <person name="King L.M."/>
            <person name="Leal B."/>
            <person name="Lebow H."/>
            <person name="Lee S."/>
            <person name="LeVan J.M."/>
            <person name="Lewis L.C."/>
            <person name="London P."/>
            <person name="Lorensuhewa L.M."/>
            <person name="Loulseged H."/>
            <person name="Lovett D.A."/>
            <person name="Lucier A."/>
            <person name="Lucier R.L."/>
            <person name="Ma J."/>
            <person name="Madu R.C."/>
            <person name="Mapua P."/>
            <person name="Martindale A.D."/>
            <person name="Martinez E."/>
            <person name="Massey E."/>
            <person name="Mawhiney S."/>
            <person name="Meador M.G."/>
            <person name="Mendez S."/>
            <person name="Mercado C."/>
            <person name="Mercado I.C."/>
            <person name="Merritt C.E."/>
            <person name="Miner Z.L."/>
            <person name="Minja E."/>
            <person name="Mitchell T."/>
            <person name="Mohabbat F."/>
            <person name="Mohabbat K."/>
            <person name="Montgomery B."/>
            <person name="Moore N."/>
            <person name="Morris S."/>
            <person name="Munidasa M."/>
            <person name="Ngo R.N."/>
            <person name="Nguyen N.B."/>
            <person name="Nickerson E."/>
            <person name="Nwaokelemeh O.O."/>
            <person name="Nwokenkwo S."/>
            <person name="Obregon M."/>
            <person name="Oguh M."/>
            <person name="Oragunye N."/>
            <person name="Oviedo R.J."/>
            <person name="Parish B.J."/>
            <person name="Parker D.N."/>
            <person name="Parrish J."/>
            <person name="Parks K.L."/>
            <person name="Paul H.A."/>
            <person name="Payton B.A."/>
            <person name="Perez A."/>
            <person name="Perrin W."/>
            <person name="Pickens A."/>
            <person name="Primus E.L."/>
            <person name="Pu L.-L."/>
            <person name="Puazo M."/>
            <person name="Quiles M.M."/>
            <person name="Quiroz J.B."/>
            <person name="Rabata D."/>
            <person name="Reeves K."/>
            <person name="Ruiz S.J."/>
            <person name="Shao H."/>
            <person name="Sisson I."/>
            <person name="Sonaike T."/>
            <person name="Sorelle R.P."/>
            <person name="Sutton A.E."/>
            <person name="Svatek A.F."/>
            <person name="Svetz L.A."/>
            <person name="Tamerisa K.S."/>
            <person name="Taylor T.R."/>
            <person name="Teague B."/>
            <person name="Thomas N."/>
            <person name="Thorn R.D."/>
            <person name="Trejos Z.Y."/>
            <person name="Trevino B.K."/>
            <person name="Ukegbu O.N."/>
            <person name="Urban J.B."/>
            <person name="Vasquez L.I."/>
            <person name="Vera V.A."/>
            <person name="Villasana D.M."/>
            <person name="Wang L."/>
            <person name="Ward-Moore S."/>
            <person name="Warren J.T."/>
            <person name="Wei X."/>
            <person name="White F."/>
            <person name="Williamson A.L."/>
            <person name="Wleczyk R."/>
            <person name="Wooden H.S."/>
            <person name="Wooden S.H."/>
            <person name="Yen J."/>
            <person name="Yoon L."/>
            <person name="Yoon V."/>
            <person name="Zorrilla S.E."/>
            <person name="Nelson D."/>
            <person name="Kucherlapati R."/>
            <person name="Weinstock G."/>
            <person name="Gibbs R.A."/>
        </authorList>
    </citation>
    <scope>NUCLEOTIDE SEQUENCE [LARGE SCALE GENOMIC DNA]</scope>
</reference>
<reference key="10">
    <citation type="submission" date="2005-07" db="EMBL/GenBank/DDBJ databases">
        <authorList>
            <person name="Mural R.J."/>
            <person name="Istrail S."/>
            <person name="Sutton G.G."/>
            <person name="Florea L."/>
            <person name="Halpern A.L."/>
            <person name="Mobarry C.M."/>
            <person name="Lippert R."/>
            <person name="Walenz B."/>
            <person name="Shatkay H."/>
            <person name="Dew I."/>
            <person name="Miller J.R."/>
            <person name="Flanigan M.J."/>
            <person name="Edwards N.J."/>
            <person name="Bolanos R."/>
            <person name="Fasulo D."/>
            <person name="Halldorsson B.V."/>
            <person name="Hannenhalli S."/>
            <person name="Turner R."/>
            <person name="Yooseph S."/>
            <person name="Lu F."/>
            <person name="Nusskern D.R."/>
            <person name="Shue B.C."/>
            <person name="Zheng X.H."/>
            <person name="Zhong F."/>
            <person name="Delcher A.L."/>
            <person name="Huson D.H."/>
            <person name="Kravitz S.A."/>
            <person name="Mouchard L."/>
            <person name="Reinert K."/>
            <person name="Remington K.A."/>
            <person name="Clark A.G."/>
            <person name="Waterman M.S."/>
            <person name="Eichler E.E."/>
            <person name="Adams M.D."/>
            <person name="Hunkapiller M.W."/>
            <person name="Myers E.W."/>
            <person name="Venter J.C."/>
        </authorList>
    </citation>
    <scope>NUCLEOTIDE SEQUENCE [LARGE SCALE GENOMIC DNA]</scope>
</reference>
<reference key="11">
    <citation type="journal article" date="2004" name="Genome Res.">
        <title>The status, quality, and expansion of the NIH full-length cDNA project: the Mammalian Gene Collection (MGC).</title>
        <authorList>
            <consortium name="The MGC Project Team"/>
        </authorList>
    </citation>
    <scope>NUCLEOTIDE SEQUENCE [LARGE SCALE MRNA]</scope>
</reference>
<reference key="12">
    <citation type="journal article" date="2011" name="Pharmacol. Rev.">
        <title>International union of basic and clinical pharmacology. LXXXII: nomenclature and classification of hydroxy-carboxylic acid receptors (GPR81, GPR109A, and GPR109B).</title>
        <authorList>
            <person name="Offermanns S."/>
            <person name="Colletti S.L."/>
            <person name="Lovenberg T.W."/>
            <person name="Semple G."/>
            <person name="Wise A."/>
            <person name="Ijzerman A.P."/>
        </authorList>
    </citation>
    <scope>NOMENCLATURE</scope>
</reference>
<gene>
    <name type="primary">HCAR1</name>
    <name type="synonym">GPR104</name>
    <name type="synonym">GPR81</name>
    <name type="synonym">HCA1</name>
    <name type="ORF">FKSG80</name>
</gene>
<keyword id="KW-1003">Cell membrane</keyword>
<keyword id="KW-1015">Disulfide bond</keyword>
<keyword id="KW-0297">G-protein coupled receptor</keyword>
<keyword id="KW-0325">Glycoprotein</keyword>
<keyword id="KW-0472">Membrane</keyword>
<keyword id="KW-1267">Proteomics identification</keyword>
<keyword id="KW-0675">Receptor</keyword>
<keyword id="KW-1185">Reference proteome</keyword>
<keyword id="KW-0807">Transducer</keyword>
<keyword id="KW-0812">Transmembrane</keyword>
<keyword id="KW-1133">Transmembrane helix</keyword>
<protein>
    <recommendedName>
        <fullName>Hydroxycarboxylic acid receptor 1</fullName>
    </recommendedName>
    <alternativeName>
        <fullName>G-protein coupled receptor 104</fullName>
    </alternativeName>
    <alternativeName>
        <fullName>G-protein coupled receptor 81</fullName>
    </alternativeName>
</protein>
<organism>
    <name type="scientific">Homo sapiens</name>
    <name type="common">Human</name>
    <dbReference type="NCBI Taxonomy" id="9606"/>
    <lineage>
        <taxon>Eukaryota</taxon>
        <taxon>Metazoa</taxon>
        <taxon>Chordata</taxon>
        <taxon>Craniata</taxon>
        <taxon>Vertebrata</taxon>
        <taxon>Euteleostomi</taxon>
        <taxon>Mammalia</taxon>
        <taxon>Eutheria</taxon>
        <taxon>Euarchontoglires</taxon>
        <taxon>Primates</taxon>
        <taxon>Haplorrhini</taxon>
        <taxon>Catarrhini</taxon>
        <taxon>Hominidae</taxon>
        <taxon>Homo</taxon>
    </lineage>
</organism>
<dbReference type="EMBL" id="AF411110">
    <property type="protein sequence ID" value="AAL26481.1"/>
    <property type="molecule type" value="Genomic_DNA"/>
</dbReference>
<dbReference type="EMBL" id="EU809458">
    <property type="protein sequence ID" value="ACJ03844.1"/>
    <property type="molecule type" value="mRNA"/>
</dbReference>
<dbReference type="EMBL" id="AF345568">
    <property type="protein sequence ID" value="AAK29071.1"/>
    <property type="molecule type" value="mRNA"/>
</dbReference>
<dbReference type="EMBL" id="AB065866">
    <property type="protein sequence ID" value="BAC06084.1"/>
    <property type="molecule type" value="Genomic_DNA"/>
</dbReference>
<dbReference type="EMBL" id="AY507143">
    <property type="protein sequence ID" value="AAR92485.1"/>
    <property type="molecule type" value="mRNA"/>
</dbReference>
<dbReference type="EMBL" id="AK313955">
    <property type="protein sequence ID" value="BAG36671.1"/>
    <property type="molecule type" value="mRNA"/>
</dbReference>
<dbReference type="EMBL" id="AB083631">
    <property type="protein sequence ID" value="BAB89344.1"/>
    <property type="molecule type" value="Genomic_DNA"/>
</dbReference>
<dbReference type="EMBL" id="DQ157221">
    <property type="protein sequence ID" value="AAZ67915.1"/>
    <property type="molecule type" value="Genomic_DNA"/>
</dbReference>
<dbReference type="EMBL" id="AC026333">
    <property type="status" value="NOT_ANNOTATED_CDS"/>
    <property type="molecule type" value="Genomic_DNA"/>
</dbReference>
<dbReference type="EMBL" id="CH471054">
    <property type="protein sequence ID" value="EAW98337.1"/>
    <property type="molecule type" value="Genomic_DNA"/>
</dbReference>
<dbReference type="EMBL" id="BC066881">
    <property type="protein sequence ID" value="AAH66881.1"/>
    <property type="molecule type" value="mRNA"/>
</dbReference>
<dbReference type="EMBL" id="BC066882">
    <property type="protein sequence ID" value="AAH66882.1"/>
    <property type="molecule type" value="mRNA"/>
</dbReference>
<dbReference type="EMBL" id="BC066883">
    <property type="protein sequence ID" value="AAH66883.1"/>
    <property type="molecule type" value="mRNA"/>
</dbReference>
<dbReference type="EMBL" id="BC067484">
    <property type="protein sequence ID" value="AAH67484.1"/>
    <property type="molecule type" value="mRNA"/>
</dbReference>
<dbReference type="EMBL" id="BC095506">
    <property type="protein sequence ID" value="AAH95506.1"/>
    <property type="molecule type" value="mRNA"/>
</dbReference>
<dbReference type="CCDS" id="CCDS9236.1"/>
<dbReference type="RefSeq" id="NP_115943.1">
    <property type="nucleotide sequence ID" value="NM_032554.4"/>
</dbReference>
<dbReference type="SMR" id="Q9BXC0"/>
<dbReference type="BioGRID" id="118073">
    <property type="interactions" value="29"/>
</dbReference>
<dbReference type="FunCoup" id="Q9BXC0">
    <property type="interactions" value="911"/>
</dbReference>
<dbReference type="IntAct" id="Q9BXC0">
    <property type="interactions" value="5"/>
</dbReference>
<dbReference type="STRING" id="9606.ENSP00000389255"/>
<dbReference type="BindingDB" id="Q9BXC0"/>
<dbReference type="ChEMBL" id="CHEMBL1075101"/>
<dbReference type="GuidetoPHARMACOLOGY" id="311"/>
<dbReference type="TCDB" id="9.A.14.13.4">
    <property type="family name" value="the g-protein-coupled receptor (gpcr) family"/>
</dbReference>
<dbReference type="GlyCosmos" id="Q9BXC0">
    <property type="glycosylation" value="1 site, No reported glycans"/>
</dbReference>
<dbReference type="GlyGen" id="Q9BXC0">
    <property type="glycosylation" value="1 site"/>
</dbReference>
<dbReference type="PhosphoSitePlus" id="Q9BXC0"/>
<dbReference type="BioMuta" id="HCAR1"/>
<dbReference type="DMDM" id="47117701"/>
<dbReference type="MassIVE" id="Q9BXC0"/>
<dbReference type="PaxDb" id="9606-ENSP00000389255"/>
<dbReference type="PeptideAtlas" id="Q9BXC0"/>
<dbReference type="ProteomicsDB" id="79402"/>
<dbReference type="Antibodypedia" id="19185">
    <property type="antibodies" value="359 antibodies from 32 providers"/>
</dbReference>
<dbReference type="DNASU" id="27198"/>
<dbReference type="Ensembl" id="ENST00000432564.3">
    <property type="protein sequence ID" value="ENSP00000389255.1"/>
    <property type="gene ID" value="ENSG00000196917.6"/>
</dbReference>
<dbReference type="GeneID" id="27198"/>
<dbReference type="KEGG" id="hsa:27198"/>
<dbReference type="MANE-Select" id="ENST00000432564.3">
    <property type="protein sequence ID" value="ENSP00000389255.1"/>
    <property type="RefSeq nucleotide sequence ID" value="NM_032554.4"/>
    <property type="RefSeq protein sequence ID" value="NP_115943.1"/>
</dbReference>
<dbReference type="UCSC" id="uc001ucz.4">
    <property type="organism name" value="human"/>
</dbReference>
<dbReference type="AGR" id="HGNC:4532"/>
<dbReference type="CTD" id="27198"/>
<dbReference type="DisGeNET" id="27198"/>
<dbReference type="GeneCards" id="HCAR1"/>
<dbReference type="HGNC" id="HGNC:4532">
    <property type="gene designation" value="HCAR1"/>
</dbReference>
<dbReference type="HPA" id="ENSG00000196917">
    <property type="expression patterns" value="Group enriched (breast, parathyroid gland)"/>
</dbReference>
<dbReference type="MIM" id="606923">
    <property type="type" value="gene"/>
</dbReference>
<dbReference type="neXtProt" id="NX_Q9BXC0"/>
<dbReference type="OpenTargets" id="ENSG00000196917"/>
<dbReference type="PharmGKB" id="PA28925"/>
<dbReference type="VEuPathDB" id="HostDB:ENSG00000196917"/>
<dbReference type="eggNOG" id="KOG3656">
    <property type="taxonomic scope" value="Eukaryota"/>
</dbReference>
<dbReference type="GeneTree" id="ENSGT00990000203619"/>
<dbReference type="HOGENOM" id="CLU_009579_8_2_1"/>
<dbReference type="InParanoid" id="Q9BXC0"/>
<dbReference type="OMA" id="RHRQWAF"/>
<dbReference type="OrthoDB" id="10055255at2759"/>
<dbReference type="PAN-GO" id="Q9BXC0">
    <property type="GO annotations" value="3 GO annotations based on evolutionary models"/>
</dbReference>
<dbReference type="PhylomeDB" id="Q9BXC0"/>
<dbReference type="TreeFam" id="TF330775"/>
<dbReference type="PathwayCommons" id="Q9BXC0"/>
<dbReference type="Reactome" id="R-HSA-3296197">
    <property type="pathway name" value="Hydroxycarboxylic acid-binding receptors"/>
</dbReference>
<dbReference type="Reactome" id="R-HSA-418594">
    <property type="pathway name" value="G alpha (i) signalling events"/>
</dbReference>
<dbReference type="SignaLink" id="Q9BXC0"/>
<dbReference type="BioGRID-ORCS" id="27198">
    <property type="hits" value="18 hits in 1137 CRISPR screens"/>
</dbReference>
<dbReference type="ChiTaRS" id="HCAR1">
    <property type="organism name" value="human"/>
</dbReference>
<dbReference type="GeneWiki" id="GPR81"/>
<dbReference type="GenomeRNAi" id="27198"/>
<dbReference type="Pharos" id="Q9BXC0">
    <property type="development level" value="Tchem"/>
</dbReference>
<dbReference type="PRO" id="PR:Q9BXC0"/>
<dbReference type="Proteomes" id="UP000005640">
    <property type="component" value="Chromosome 12"/>
</dbReference>
<dbReference type="RNAct" id="Q9BXC0">
    <property type="molecule type" value="protein"/>
</dbReference>
<dbReference type="Bgee" id="ENSG00000196917">
    <property type="expression patterns" value="Expressed in primordial germ cell in gonad and 66 other cell types or tissues"/>
</dbReference>
<dbReference type="ExpressionAtlas" id="Q9BXC0">
    <property type="expression patterns" value="baseline and differential"/>
</dbReference>
<dbReference type="GO" id="GO:0005886">
    <property type="term" value="C:plasma membrane"/>
    <property type="evidence" value="ECO:0000318"/>
    <property type="project" value="GO_Central"/>
</dbReference>
<dbReference type="GO" id="GO:0004930">
    <property type="term" value="F:G protein-coupled receptor activity"/>
    <property type="evidence" value="ECO:0000318"/>
    <property type="project" value="GO_Central"/>
</dbReference>
<dbReference type="GO" id="GO:0007186">
    <property type="term" value="P:G protein-coupled receptor signaling pathway"/>
    <property type="evidence" value="ECO:0000318"/>
    <property type="project" value="GO_Central"/>
</dbReference>
<dbReference type="GO" id="GO:0050995">
    <property type="term" value="P:negative regulation of lipid catabolic process"/>
    <property type="evidence" value="ECO:0007669"/>
    <property type="project" value="Ensembl"/>
</dbReference>
<dbReference type="CDD" id="cd15201">
    <property type="entry name" value="7tmA_HCAR1-3"/>
    <property type="match status" value="1"/>
</dbReference>
<dbReference type="FunFam" id="1.20.1070.10:FF:000241">
    <property type="entry name" value="Hydroxycarboxylic acid receptor 1"/>
    <property type="match status" value="1"/>
</dbReference>
<dbReference type="Gene3D" id="1.20.1070.10">
    <property type="entry name" value="Rhodopsin 7-helix transmembrane proteins"/>
    <property type="match status" value="1"/>
</dbReference>
<dbReference type="InterPro" id="IPR000276">
    <property type="entry name" value="GPCR_Rhodpsn"/>
</dbReference>
<dbReference type="InterPro" id="IPR017452">
    <property type="entry name" value="GPCR_Rhodpsn_7TM"/>
</dbReference>
<dbReference type="InterPro" id="IPR051893">
    <property type="entry name" value="HCARs"/>
</dbReference>
<dbReference type="PANTHER" id="PTHR46048:SF3">
    <property type="entry name" value="HYDROXYCARBOXYLIC ACID RECEPTOR 1"/>
    <property type="match status" value="1"/>
</dbReference>
<dbReference type="PANTHER" id="PTHR46048">
    <property type="entry name" value="HYDROXYCARBOXYLIC ACID RECEPTOR 2"/>
    <property type="match status" value="1"/>
</dbReference>
<dbReference type="Pfam" id="PF00001">
    <property type="entry name" value="7tm_1"/>
    <property type="match status" value="1"/>
</dbReference>
<dbReference type="PRINTS" id="PR00237">
    <property type="entry name" value="GPCRRHODOPSN"/>
</dbReference>
<dbReference type="SUPFAM" id="SSF81321">
    <property type="entry name" value="Family A G protein-coupled receptor-like"/>
    <property type="match status" value="1"/>
</dbReference>
<dbReference type="PROSITE" id="PS00237">
    <property type="entry name" value="G_PROTEIN_RECEP_F1_1"/>
    <property type="match status" value="1"/>
</dbReference>
<dbReference type="PROSITE" id="PS50262">
    <property type="entry name" value="G_PROTEIN_RECEP_F1_2"/>
    <property type="match status" value="1"/>
</dbReference>
<sequence>MYNGSCCRIEGDTISQVMPPLLIVAFVLGALGNGVALCGFCFHMKTWKPSTVYLFNLAVADFLLMICLPFRTDYYLRRRHWAFGDIPCRVGLFTLAMNRAGSIVFLTVVAADRYFKVVHPHHAVNTISTRVAAGIVCTLWALVILGTVYLLLENHLCVQETAVSCESFIMESANGWHDIMFQLEFFMPLGIILFCSFKIVWSLRRRQQLARQARMKKATRFIMVVAIVFITCYLPSVSARLYFLWTVPSSACDPSVHGALHITLSFTYMNSMLDPLVYYFSSPSFPKFYNKLKICSLKPKQPGHSKTQRPEEMPISNLGRRSCISVANSFQSQSDGQWDPHIVEWH</sequence>